<accession>Q941I2</accession>
<comment type="function">
    <text evidence="4 5">Probable transcription factor that regulates lateral organ polarity. Plays a role in lateral root formation and development.</text>
</comment>
<comment type="subcellular location">
    <subcellularLocation>
        <location evidence="6">Nucleus</location>
    </subcellularLocation>
</comment>
<comment type="tissue specificity">
    <text evidence="3">Expressed in developing phloem.</text>
</comment>
<protein>
    <recommendedName>
        <fullName>Probable transcription factor KAN3</fullName>
    </recommendedName>
    <alternativeName>
        <fullName>Protein KANADI 3</fullName>
    </alternativeName>
</protein>
<name>KAN3_ARATH</name>
<feature type="chain" id="PRO_0000408382" description="Probable transcription factor KAN3">
    <location>
        <begin position="1"/>
        <end position="322"/>
    </location>
</feature>
<feature type="domain" description="HTH myb-type">
    <location>
        <begin position="161"/>
        <end position="221"/>
    </location>
</feature>
<feature type="DNA-binding region" description="H-T-H motif" evidence="1">
    <location>
        <begin position="192"/>
        <end position="217"/>
    </location>
</feature>
<feature type="region of interest" description="Disordered" evidence="2">
    <location>
        <begin position="1"/>
        <end position="35"/>
    </location>
</feature>
<feature type="region of interest" description="Disordered" evidence="2">
    <location>
        <begin position="222"/>
        <end position="244"/>
    </location>
</feature>
<feature type="region of interest" description="Disordered" evidence="2">
    <location>
        <begin position="267"/>
        <end position="322"/>
    </location>
</feature>
<feature type="compositionally biased region" description="Basic and acidic residues" evidence="2">
    <location>
        <begin position="17"/>
        <end position="35"/>
    </location>
</feature>
<feature type="compositionally biased region" description="Polar residues" evidence="2">
    <location>
        <begin position="224"/>
        <end position="241"/>
    </location>
</feature>
<feature type="compositionally biased region" description="Polar residues" evidence="2">
    <location>
        <begin position="299"/>
        <end position="322"/>
    </location>
</feature>
<organism>
    <name type="scientific">Arabidopsis thaliana</name>
    <name type="common">Mouse-ear cress</name>
    <dbReference type="NCBI Taxonomy" id="3702"/>
    <lineage>
        <taxon>Eukaryota</taxon>
        <taxon>Viridiplantae</taxon>
        <taxon>Streptophyta</taxon>
        <taxon>Embryophyta</taxon>
        <taxon>Tracheophyta</taxon>
        <taxon>Spermatophyta</taxon>
        <taxon>Magnoliopsida</taxon>
        <taxon>eudicotyledons</taxon>
        <taxon>Gunneridae</taxon>
        <taxon>Pentapetalae</taxon>
        <taxon>rosids</taxon>
        <taxon>malvids</taxon>
        <taxon>Brassicales</taxon>
        <taxon>Brassicaceae</taxon>
        <taxon>Camelineae</taxon>
        <taxon>Arabidopsis</taxon>
    </lineage>
</organism>
<sequence>MELFPSQPDLYLKISRRREEEQEKESQELQEQEVERRLGFQSKASDLDNKSSNNLIHTLQFTSNNEATKINSNQEHKESLDQDLRSIFMMRPIRGIPLYQNQVLDHYYYSSTSPNPFFFSEVNGQHASRRLITNPNCSFNLHNRHRRQAQPQPPRFTAKRGVRAPRMRWTTTLHAHFVHAVQLLGGHERATPKSVLELMDVQDLTLAHVKSHLQMYRTIKSTEKPTTSSGQSDCENGSQVNSEREARNLTGLWNNSSSEARFQLKAKASSGVDISSNENEWKNRRCPSNERLSSDSSSLTGTRPETETPNLDFTLATPNLSP</sequence>
<proteinExistence type="evidence at transcript level"/>
<keyword id="KW-0217">Developmental protein</keyword>
<keyword id="KW-0221">Differentiation</keyword>
<keyword id="KW-0238">DNA-binding</keyword>
<keyword id="KW-0539">Nucleus</keyword>
<keyword id="KW-1185">Reference proteome</keyword>
<keyword id="KW-0804">Transcription</keyword>
<keyword id="KW-0805">Transcription regulation</keyword>
<dbReference type="EMBL" id="AY048690">
    <property type="protein sequence ID" value="AAL05438.1"/>
    <property type="molecule type" value="mRNA"/>
</dbReference>
<dbReference type="EMBL" id="Z97344">
    <property type="status" value="NOT_ANNOTATED_CDS"/>
    <property type="molecule type" value="Genomic_DNA"/>
</dbReference>
<dbReference type="EMBL" id="AL161547">
    <property type="status" value="NOT_ANNOTATED_CDS"/>
    <property type="molecule type" value="Genomic_DNA"/>
</dbReference>
<dbReference type="EMBL" id="CP002687">
    <property type="protein sequence ID" value="AEE83935.1"/>
    <property type="molecule type" value="Genomic_DNA"/>
</dbReference>
<dbReference type="RefSeq" id="NP_567535.1">
    <property type="nucleotide sequence ID" value="NM_117878.3"/>
</dbReference>
<dbReference type="SMR" id="Q941I2"/>
<dbReference type="BioGRID" id="12783">
    <property type="interactions" value="12"/>
</dbReference>
<dbReference type="FunCoup" id="Q941I2">
    <property type="interactions" value="2"/>
</dbReference>
<dbReference type="IntAct" id="Q941I2">
    <property type="interactions" value="10"/>
</dbReference>
<dbReference type="STRING" id="3702.Q941I2"/>
<dbReference type="PaxDb" id="3702-AT4G17695.1"/>
<dbReference type="ProteomicsDB" id="250630"/>
<dbReference type="EnsemblPlants" id="AT4G17695.1">
    <property type="protein sequence ID" value="AT4G17695.1"/>
    <property type="gene ID" value="AT4G17695"/>
</dbReference>
<dbReference type="GeneID" id="827490"/>
<dbReference type="Gramene" id="AT4G17695.1">
    <property type="protein sequence ID" value="AT4G17695.1"/>
    <property type="gene ID" value="AT4G17695"/>
</dbReference>
<dbReference type="KEGG" id="ath:AT4G17695"/>
<dbReference type="Araport" id="AT4G17695"/>
<dbReference type="TAIR" id="AT4G17695">
    <property type="gene designation" value="KAN3"/>
</dbReference>
<dbReference type="eggNOG" id="ENOG502QRMZ">
    <property type="taxonomic scope" value="Eukaryota"/>
</dbReference>
<dbReference type="HOGENOM" id="CLU_047766_5_0_1"/>
<dbReference type="InParanoid" id="Q941I2"/>
<dbReference type="OMA" id="IGQSDTC"/>
<dbReference type="OrthoDB" id="551907at2759"/>
<dbReference type="PhylomeDB" id="Q941I2"/>
<dbReference type="PRO" id="PR:Q941I2"/>
<dbReference type="Proteomes" id="UP000006548">
    <property type="component" value="Chromosome 4"/>
</dbReference>
<dbReference type="ExpressionAtlas" id="Q941I2">
    <property type="expression patterns" value="baseline and differential"/>
</dbReference>
<dbReference type="GO" id="GO:0005634">
    <property type="term" value="C:nucleus"/>
    <property type="evidence" value="ECO:0007669"/>
    <property type="project" value="UniProtKB-SubCell"/>
</dbReference>
<dbReference type="GO" id="GO:0003700">
    <property type="term" value="F:DNA-binding transcription factor activity"/>
    <property type="evidence" value="ECO:0000250"/>
    <property type="project" value="TAIR"/>
</dbReference>
<dbReference type="GO" id="GO:0000976">
    <property type="term" value="F:transcription cis-regulatory region binding"/>
    <property type="evidence" value="ECO:0007669"/>
    <property type="project" value="InterPro"/>
</dbReference>
<dbReference type="GO" id="GO:0010158">
    <property type="term" value="P:abaxial cell fate specification"/>
    <property type="evidence" value="ECO:0007669"/>
    <property type="project" value="InterPro"/>
</dbReference>
<dbReference type="GO" id="GO:0006355">
    <property type="term" value="P:regulation of DNA-templated transcription"/>
    <property type="evidence" value="ECO:0000304"/>
    <property type="project" value="TAIR"/>
</dbReference>
<dbReference type="FunFam" id="1.10.10.60:FF:000002">
    <property type="entry name" value="Myb family transcription factor"/>
    <property type="match status" value="1"/>
</dbReference>
<dbReference type="Gene3D" id="1.10.10.60">
    <property type="entry name" value="Homeodomain-like"/>
    <property type="match status" value="1"/>
</dbReference>
<dbReference type="InterPro" id="IPR009057">
    <property type="entry name" value="Homeodomain-like_sf"/>
</dbReference>
<dbReference type="InterPro" id="IPR044847">
    <property type="entry name" value="KAN_fam"/>
</dbReference>
<dbReference type="InterPro" id="IPR006447">
    <property type="entry name" value="Myb_dom_plants"/>
</dbReference>
<dbReference type="InterPro" id="IPR001005">
    <property type="entry name" value="SANT/Myb"/>
</dbReference>
<dbReference type="NCBIfam" id="TIGR01557">
    <property type="entry name" value="myb_SHAQKYF"/>
    <property type="match status" value="1"/>
</dbReference>
<dbReference type="PANTHER" id="PTHR31496">
    <property type="entry name" value="TRANSCRIPTION FACTOR KAN2-RELATED"/>
    <property type="match status" value="1"/>
</dbReference>
<dbReference type="PANTHER" id="PTHR31496:SF25">
    <property type="entry name" value="TRANSCRIPTION FACTOR KAN3-RELATED"/>
    <property type="match status" value="1"/>
</dbReference>
<dbReference type="Pfam" id="PF00249">
    <property type="entry name" value="Myb_DNA-binding"/>
    <property type="match status" value="1"/>
</dbReference>
<dbReference type="SUPFAM" id="SSF46689">
    <property type="entry name" value="Homeodomain-like"/>
    <property type="match status" value="1"/>
</dbReference>
<reference key="1">
    <citation type="journal article" date="2001" name="Curr. Biol.">
        <title>Establishment of polarity in lateral organs of plants.</title>
        <authorList>
            <person name="Eshed Y."/>
            <person name="Baum S.F."/>
            <person name="Perea J.V."/>
            <person name="Bowman J.L."/>
        </authorList>
    </citation>
    <scope>NUCLEOTIDE SEQUENCE [MRNA]</scope>
    <source>
        <strain>cv. Columbia</strain>
    </source>
</reference>
<reference key="2">
    <citation type="journal article" date="1998" name="Nature">
        <title>Analysis of 1.9 Mb of contiguous sequence from chromosome 4 of Arabidopsis thaliana.</title>
        <authorList>
            <person name="Bevan M."/>
            <person name="Bancroft I."/>
            <person name="Bent E."/>
            <person name="Love K."/>
            <person name="Goodman H.M."/>
            <person name="Dean C."/>
            <person name="Bergkamp R."/>
            <person name="Dirkse W."/>
            <person name="van Staveren M."/>
            <person name="Stiekema W."/>
            <person name="Drost L."/>
            <person name="Ridley P."/>
            <person name="Hudson S.-A."/>
            <person name="Patel K."/>
            <person name="Murphy G."/>
            <person name="Piffanelli P."/>
            <person name="Wedler H."/>
            <person name="Wedler E."/>
            <person name="Wambutt R."/>
            <person name="Weitzenegger T."/>
            <person name="Pohl T."/>
            <person name="Terryn N."/>
            <person name="Gielen J."/>
            <person name="Villarroel R."/>
            <person name="De Clercq R."/>
            <person name="van Montagu M."/>
            <person name="Lecharny A."/>
            <person name="Aubourg S."/>
            <person name="Gy I."/>
            <person name="Kreis M."/>
            <person name="Lao N."/>
            <person name="Kavanagh T."/>
            <person name="Hempel S."/>
            <person name="Kotter P."/>
            <person name="Entian K.-D."/>
            <person name="Rieger M."/>
            <person name="Schaefer M."/>
            <person name="Funk B."/>
            <person name="Mueller-Auer S."/>
            <person name="Silvey M."/>
            <person name="James R."/>
            <person name="Monfort A."/>
            <person name="Pons A."/>
            <person name="Puigdomenech P."/>
            <person name="Douka A."/>
            <person name="Voukelatou E."/>
            <person name="Milioni D."/>
            <person name="Hatzopoulos P."/>
            <person name="Piravandi E."/>
            <person name="Obermaier B."/>
            <person name="Hilbert H."/>
            <person name="Duesterhoeft A."/>
            <person name="Moores T."/>
            <person name="Jones J.D.G."/>
            <person name="Eneva T."/>
            <person name="Palme K."/>
            <person name="Benes V."/>
            <person name="Rechmann S."/>
            <person name="Ansorge W."/>
            <person name="Cooke R."/>
            <person name="Berger C."/>
            <person name="Delseny M."/>
            <person name="Voet M."/>
            <person name="Volckaert G."/>
            <person name="Mewes H.-W."/>
            <person name="Klosterman S."/>
            <person name="Schueller C."/>
            <person name="Chalwatzis N."/>
        </authorList>
    </citation>
    <scope>NUCLEOTIDE SEQUENCE [LARGE SCALE GENOMIC DNA]</scope>
    <source>
        <strain>cv. Columbia</strain>
    </source>
</reference>
<reference key="3">
    <citation type="journal article" date="1999" name="Nature">
        <title>Sequence and analysis of chromosome 4 of the plant Arabidopsis thaliana.</title>
        <authorList>
            <person name="Mayer K.F.X."/>
            <person name="Schueller C."/>
            <person name="Wambutt R."/>
            <person name="Murphy G."/>
            <person name="Volckaert G."/>
            <person name="Pohl T."/>
            <person name="Duesterhoeft A."/>
            <person name="Stiekema W."/>
            <person name="Entian K.-D."/>
            <person name="Terryn N."/>
            <person name="Harris B."/>
            <person name="Ansorge W."/>
            <person name="Brandt P."/>
            <person name="Grivell L.A."/>
            <person name="Rieger M."/>
            <person name="Weichselgartner M."/>
            <person name="de Simone V."/>
            <person name="Obermaier B."/>
            <person name="Mache R."/>
            <person name="Mueller M."/>
            <person name="Kreis M."/>
            <person name="Delseny M."/>
            <person name="Puigdomenech P."/>
            <person name="Watson M."/>
            <person name="Schmidtheini T."/>
            <person name="Reichert B."/>
            <person name="Portetelle D."/>
            <person name="Perez-Alonso M."/>
            <person name="Boutry M."/>
            <person name="Bancroft I."/>
            <person name="Vos P."/>
            <person name="Hoheisel J."/>
            <person name="Zimmermann W."/>
            <person name="Wedler H."/>
            <person name="Ridley P."/>
            <person name="Langham S.-A."/>
            <person name="McCullagh B."/>
            <person name="Bilham L."/>
            <person name="Robben J."/>
            <person name="van der Schueren J."/>
            <person name="Grymonprez B."/>
            <person name="Chuang Y.-J."/>
            <person name="Vandenbussche F."/>
            <person name="Braeken M."/>
            <person name="Weltjens I."/>
            <person name="Voet M."/>
            <person name="Bastiaens I."/>
            <person name="Aert R."/>
            <person name="Defoor E."/>
            <person name="Weitzenegger T."/>
            <person name="Bothe G."/>
            <person name="Ramsperger U."/>
            <person name="Hilbert H."/>
            <person name="Braun M."/>
            <person name="Holzer E."/>
            <person name="Brandt A."/>
            <person name="Peters S."/>
            <person name="van Staveren M."/>
            <person name="Dirkse W."/>
            <person name="Mooijman P."/>
            <person name="Klein Lankhorst R."/>
            <person name="Rose M."/>
            <person name="Hauf J."/>
            <person name="Koetter P."/>
            <person name="Berneiser S."/>
            <person name="Hempel S."/>
            <person name="Feldpausch M."/>
            <person name="Lamberth S."/>
            <person name="Van den Daele H."/>
            <person name="De Keyser A."/>
            <person name="Buysshaert C."/>
            <person name="Gielen J."/>
            <person name="Villarroel R."/>
            <person name="De Clercq R."/>
            <person name="van Montagu M."/>
            <person name="Rogers J."/>
            <person name="Cronin A."/>
            <person name="Quail M.A."/>
            <person name="Bray-Allen S."/>
            <person name="Clark L."/>
            <person name="Doggett J."/>
            <person name="Hall S."/>
            <person name="Kay M."/>
            <person name="Lennard N."/>
            <person name="McLay K."/>
            <person name="Mayes R."/>
            <person name="Pettett A."/>
            <person name="Rajandream M.A."/>
            <person name="Lyne M."/>
            <person name="Benes V."/>
            <person name="Rechmann S."/>
            <person name="Borkova D."/>
            <person name="Bloecker H."/>
            <person name="Scharfe M."/>
            <person name="Grimm M."/>
            <person name="Loehnert T.-H."/>
            <person name="Dose S."/>
            <person name="de Haan M."/>
            <person name="Maarse A.C."/>
            <person name="Schaefer M."/>
            <person name="Mueller-Auer S."/>
            <person name="Gabel C."/>
            <person name="Fuchs M."/>
            <person name="Fartmann B."/>
            <person name="Granderath K."/>
            <person name="Dauner D."/>
            <person name="Herzl A."/>
            <person name="Neumann S."/>
            <person name="Argiriou A."/>
            <person name="Vitale D."/>
            <person name="Liguori R."/>
            <person name="Piravandi E."/>
            <person name="Massenet O."/>
            <person name="Quigley F."/>
            <person name="Clabauld G."/>
            <person name="Muendlein A."/>
            <person name="Felber R."/>
            <person name="Schnabl S."/>
            <person name="Hiller R."/>
            <person name="Schmidt W."/>
            <person name="Lecharny A."/>
            <person name="Aubourg S."/>
            <person name="Chefdor F."/>
            <person name="Cooke R."/>
            <person name="Berger C."/>
            <person name="Monfort A."/>
            <person name="Casacuberta E."/>
            <person name="Gibbons T."/>
            <person name="Weber N."/>
            <person name="Vandenbol M."/>
            <person name="Bargues M."/>
            <person name="Terol J."/>
            <person name="Torres A."/>
            <person name="Perez-Perez A."/>
            <person name="Purnelle B."/>
            <person name="Bent E."/>
            <person name="Johnson S."/>
            <person name="Tacon D."/>
            <person name="Jesse T."/>
            <person name="Heijnen L."/>
            <person name="Schwarz S."/>
            <person name="Scholler P."/>
            <person name="Heber S."/>
            <person name="Francs P."/>
            <person name="Bielke C."/>
            <person name="Frishman D."/>
            <person name="Haase D."/>
            <person name="Lemcke K."/>
            <person name="Mewes H.-W."/>
            <person name="Stocker S."/>
            <person name="Zaccaria P."/>
            <person name="Bevan M."/>
            <person name="Wilson R.K."/>
            <person name="de la Bastide M."/>
            <person name="Habermann K."/>
            <person name="Parnell L."/>
            <person name="Dedhia N."/>
            <person name="Gnoj L."/>
            <person name="Schutz K."/>
            <person name="Huang E."/>
            <person name="Spiegel L."/>
            <person name="Sekhon M."/>
            <person name="Murray J."/>
            <person name="Sheet P."/>
            <person name="Cordes M."/>
            <person name="Abu-Threideh J."/>
            <person name="Stoneking T."/>
            <person name="Kalicki J."/>
            <person name="Graves T."/>
            <person name="Harmon G."/>
            <person name="Edwards J."/>
            <person name="Latreille P."/>
            <person name="Courtney L."/>
            <person name="Cloud J."/>
            <person name="Abbott A."/>
            <person name="Scott K."/>
            <person name="Johnson D."/>
            <person name="Minx P."/>
            <person name="Bentley D."/>
            <person name="Fulton B."/>
            <person name="Miller N."/>
            <person name="Greco T."/>
            <person name="Kemp K."/>
            <person name="Kramer J."/>
            <person name="Fulton L."/>
            <person name="Mardis E."/>
            <person name="Dante M."/>
            <person name="Pepin K."/>
            <person name="Hillier L.W."/>
            <person name="Nelson J."/>
            <person name="Spieth J."/>
            <person name="Ryan E."/>
            <person name="Andrews S."/>
            <person name="Geisel C."/>
            <person name="Layman D."/>
            <person name="Du H."/>
            <person name="Ali J."/>
            <person name="Berghoff A."/>
            <person name="Jones K."/>
            <person name="Drone K."/>
            <person name="Cotton M."/>
            <person name="Joshu C."/>
            <person name="Antonoiu B."/>
            <person name="Zidanic M."/>
            <person name="Strong C."/>
            <person name="Sun H."/>
            <person name="Lamar B."/>
            <person name="Yordan C."/>
            <person name="Ma P."/>
            <person name="Zhong J."/>
            <person name="Preston R."/>
            <person name="Vil D."/>
            <person name="Shekher M."/>
            <person name="Matero A."/>
            <person name="Shah R."/>
            <person name="Swaby I.K."/>
            <person name="O'Shaughnessy A."/>
            <person name="Rodriguez M."/>
            <person name="Hoffman J."/>
            <person name="Till S."/>
            <person name="Granat S."/>
            <person name="Shohdy N."/>
            <person name="Hasegawa A."/>
            <person name="Hameed A."/>
            <person name="Lodhi M."/>
            <person name="Johnson A."/>
            <person name="Chen E."/>
            <person name="Marra M.A."/>
            <person name="Martienssen R."/>
            <person name="McCombie W.R."/>
        </authorList>
    </citation>
    <scope>NUCLEOTIDE SEQUENCE [LARGE SCALE GENOMIC DNA]</scope>
    <source>
        <strain>cv. Columbia</strain>
    </source>
</reference>
<reference key="4">
    <citation type="journal article" date="2017" name="Plant J.">
        <title>Araport11: a complete reannotation of the Arabidopsis thaliana reference genome.</title>
        <authorList>
            <person name="Cheng C.Y."/>
            <person name="Krishnakumar V."/>
            <person name="Chan A.P."/>
            <person name="Thibaud-Nissen F."/>
            <person name="Schobel S."/>
            <person name="Town C.D."/>
        </authorList>
    </citation>
    <scope>GENOME REANNOTATION</scope>
    <source>
        <strain>cv. Columbia</strain>
    </source>
</reference>
<reference key="5">
    <citation type="journal article" date="2003" name="Curr. Biol.">
        <title>Radial patterning of Arabidopsis shoots by class III HD-ZIP and KANADI genes.</title>
        <authorList>
            <person name="Emery J.F."/>
            <person name="Floyd S.K."/>
            <person name="Alvarez J."/>
            <person name="Eshed Y."/>
            <person name="Hawker N.P."/>
            <person name="Izhaki A."/>
            <person name="Baum S.F."/>
            <person name="Bowman J.L."/>
        </authorList>
    </citation>
    <scope>TISSUE SPECIFICITY</scope>
</reference>
<reference key="6">
    <citation type="journal article" date="2004" name="Plant Physiol.">
        <title>Roles for Class III HD-Zip and KANADI genes in Arabidopsis root development.</title>
        <authorList>
            <person name="Hawker N.P."/>
            <person name="Bowman J.L."/>
        </authorList>
    </citation>
    <scope>FUNCTION</scope>
</reference>
<reference key="7">
    <citation type="journal article" date="2007" name="Plant Cell">
        <title>KANADI and class III HD-Zip gene families regulate embryo patterning and modulate auxin flow during embryogenesis in Arabidopsis.</title>
        <authorList>
            <person name="Izhaki A."/>
            <person name="Bowman J.L."/>
        </authorList>
    </citation>
    <scope>FUNCTION</scope>
</reference>
<gene>
    <name type="primary">KAN3</name>
    <name type="ordered locus">At4g17695</name>
    <name type="ORF">FCAALL</name>
</gene>
<evidence type="ECO:0000250" key="1"/>
<evidence type="ECO:0000256" key="2">
    <source>
        <dbReference type="SAM" id="MobiDB-lite"/>
    </source>
</evidence>
<evidence type="ECO:0000269" key="3">
    <source>
    </source>
</evidence>
<evidence type="ECO:0000269" key="4">
    <source>
    </source>
</evidence>
<evidence type="ECO:0000269" key="5">
    <source>
    </source>
</evidence>
<evidence type="ECO:0000305" key="6"/>